<accession>Q5HF07</accession>
<gene>
    <name evidence="1" type="primary">ribBA</name>
    <name type="ordered locus">SACOL1818</name>
</gene>
<evidence type="ECO:0000255" key="1">
    <source>
        <dbReference type="HAMAP-Rule" id="MF_01283"/>
    </source>
</evidence>
<sequence length="393" mass="44188">MQFDNIDSALMALKNGEPIIVVDDENRENEGDLVAVTEWMNDNTINFMAKEARGLICAPVSKDIAQRLDLVQMVDDNSDIFGTQFTVSIDHVDTTTGISAYERTLTAKKLIDPSSEAKDFNRPGHLFPLVAQDKGVLARNGHTEAAVDLAKLTGAKPAGVICEIMNDDGTMAKGQDLQKFKEKHQLKMITIDDLIEYRKKLEPEIEFKAKVKMPTDFGTFDMYGFKATYTDEEIVVLTKGAIRQHENVRLHSACLTGDIFHSQRCDCGAQLESSMKYINEHGGMIIYLPQEGRGIGLLNKLRAYELIEQGYDTVTANLALGFDEDLRDYHIAAQILKYFNIEHINLLSNNPSKFEGLKQYGIDIAERIEVIVPETVHNHDYMETKKIKMGHLI</sequence>
<protein>
    <recommendedName>
        <fullName evidence="1">Riboflavin biosynthesis protein RibBA</fullName>
    </recommendedName>
    <domain>
        <recommendedName>
            <fullName evidence="1">3,4-dihydroxy-2-butanone 4-phosphate synthase</fullName>
            <shortName evidence="1">DHBP synthase</shortName>
            <ecNumber evidence="1">4.1.99.12</ecNumber>
        </recommendedName>
    </domain>
    <domain>
        <recommendedName>
            <fullName evidence="1">GTP cyclohydrolase-2</fullName>
            <ecNumber evidence="1">3.5.4.25</ecNumber>
        </recommendedName>
        <alternativeName>
            <fullName evidence="1">GTP cyclohydrolase II</fullName>
        </alternativeName>
    </domain>
</protein>
<feature type="chain" id="PRO_0000151733" description="Riboflavin biosynthesis protein RibBA">
    <location>
        <begin position="1"/>
        <end position="393"/>
    </location>
</feature>
<feature type="region of interest" description="DHBP synthase">
    <location>
        <begin position="1"/>
        <end position="200"/>
    </location>
</feature>
<feature type="region of interest" description="GTP cyclohydrolase II">
    <location>
        <begin position="201"/>
        <end position="393"/>
    </location>
</feature>
<feature type="active site" description="Proton acceptor; for GTP cyclohydrolase activity" evidence="1">
    <location>
        <position position="325"/>
    </location>
</feature>
<feature type="active site" description="Nucleophile; for GTP cyclohydrolase activity" evidence="1">
    <location>
        <position position="327"/>
    </location>
</feature>
<feature type="binding site" evidence="1">
    <location>
        <begin position="27"/>
        <end position="28"/>
    </location>
    <ligand>
        <name>D-ribulose 5-phosphate</name>
        <dbReference type="ChEBI" id="CHEBI:58121"/>
    </ligand>
</feature>
<feature type="binding site" evidence="1">
    <location>
        <position position="28"/>
    </location>
    <ligand>
        <name>Mg(2+)</name>
        <dbReference type="ChEBI" id="CHEBI:18420"/>
        <label>1</label>
    </ligand>
</feature>
<feature type="binding site" evidence="1">
    <location>
        <position position="28"/>
    </location>
    <ligand>
        <name>Mg(2+)</name>
        <dbReference type="ChEBI" id="CHEBI:18420"/>
        <label>2</label>
    </ligand>
</feature>
<feature type="binding site" evidence="1">
    <location>
        <position position="32"/>
    </location>
    <ligand>
        <name>D-ribulose 5-phosphate</name>
        <dbReference type="ChEBI" id="CHEBI:58121"/>
    </ligand>
</feature>
<feature type="binding site" evidence="1">
    <location>
        <begin position="139"/>
        <end position="143"/>
    </location>
    <ligand>
        <name>D-ribulose 5-phosphate</name>
        <dbReference type="ChEBI" id="CHEBI:58121"/>
    </ligand>
</feature>
<feature type="binding site" evidence="1">
    <location>
        <position position="142"/>
    </location>
    <ligand>
        <name>Mg(2+)</name>
        <dbReference type="ChEBI" id="CHEBI:18420"/>
        <label>2</label>
    </ligand>
</feature>
<feature type="binding site" evidence="1">
    <location>
        <position position="163"/>
    </location>
    <ligand>
        <name>D-ribulose 5-phosphate</name>
        <dbReference type="ChEBI" id="CHEBI:58121"/>
    </ligand>
</feature>
<feature type="binding site" evidence="1">
    <location>
        <begin position="249"/>
        <end position="253"/>
    </location>
    <ligand>
        <name>GTP</name>
        <dbReference type="ChEBI" id="CHEBI:37565"/>
    </ligand>
</feature>
<feature type="binding site" evidence="1">
    <location>
        <position position="254"/>
    </location>
    <ligand>
        <name>Zn(2+)</name>
        <dbReference type="ChEBI" id="CHEBI:29105"/>
        <note>catalytic</note>
    </ligand>
</feature>
<feature type="binding site" evidence="1">
    <location>
        <position position="265"/>
    </location>
    <ligand>
        <name>Zn(2+)</name>
        <dbReference type="ChEBI" id="CHEBI:29105"/>
        <note>catalytic</note>
    </ligand>
</feature>
<feature type="binding site" evidence="1">
    <location>
        <position position="267"/>
    </location>
    <ligand>
        <name>Zn(2+)</name>
        <dbReference type="ChEBI" id="CHEBI:29105"/>
        <note>catalytic</note>
    </ligand>
</feature>
<feature type="binding site" evidence="1">
    <location>
        <position position="270"/>
    </location>
    <ligand>
        <name>GTP</name>
        <dbReference type="ChEBI" id="CHEBI:37565"/>
    </ligand>
</feature>
<feature type="binding site" evidence="1">
    <location>
        <begin position="291"/>
        <end position="293"/>
    </location>
    <ligand>
        <name>GTP</name>
        <dbReference type="ChEBI" id="CHEBI:37565"/>
    </ligand>
</feature>
<feature type="binding site" evidence="1">
    <location>
        <position position="313"/>
    </location>
    <ligand>
        <name>GTP</name>
        <dbReference type="ChEBI" id="CHEBI:37565"/>
    </ligand>
</feature>
<feature type="binding site" evidence="1">
    <location>
        <position position="348"/>
    </location>
    <ligand>
        <name>GTP</name>
        <dbReference type="ChEBI" id="CHEBI:37565"/>
    </ligand>
</feature>
<feature type="binding site" evidence="1">
    <location>
        <position position="353"/>
    </location>
    <ligand>
        <name>GTP</name>
        <dbReference type="ChEBI" id="CHEBI:37565"/>
    </ligand>
</feature>
<feature type="site" description="Essential for DHBP synthase activity" evidence="1">
    <location>
        <position position="125"/>
    </location>
</feature>
<feature type="site" description="Essential for DHBP synthase activity" evidence="1">
    <location>
        <position position="163"/>
    </location>
</feature>
<organism>
    <name type="scientific">Staphylococcus aureus (strain COL)</name>
    <dbReference type="NCBI Taxonomy" id="93062"/>
    <lineage>
        <taxon>Bacteria</taxon>
        <taxon>Bacillati</taxon>
        <taxon>Bacillota</taxon>
        <taxon>Bacilli</taxon>
        <taxon>Bacillales</taxon>
        <taxon>Staphylococcaceae</taxon>
        <taxon>Staphylococcus</taxon>
    </lineage>
</organism>
<proteinExistence type="inferred from homology"/>
<dbReference type="EC" id="4.1.99.12" evidence="1"/>
<dbReference type="EC" id="3.5.4.25" evidence="1"/>
<dbReference type="EMBL" id="CP000046">
    <property type="protein sequence ID" value="AAW38345.1"/>
    <property type="molecule type" value="Genomic_DNA"/>
</dbReference>
<dbReference type="SMR" id="Q5HF07"/>
<dbReference type="KEGG" id="sac:SACOL1818"/>
<dbReference type="HOGENOM" id="CLU_020273_1_2_9"/>
<dbReference type="UniPathway" id="UPA00275">
    <property type="reaction ID" value="UER00399"/>
</dbReference>
<dbReference type="UniPathway" id="UPA00275">
    <property type="reaction ID" value="UER00400"/>
</dbReference>
<dbReference type="Proteomes" id="UP000000530">
    <property type="component" value="Chromosome"/>
</dbReference>
<dbReference type="GO" id="GO:0005829">
    <property type="term" value="C:cytosol"/>
    <property type="evidence" value="ECO:0007669"/>
    <property type="project" value="TreeGrafter"/>
</dbReference>
<dbReference type="GO" id="GO:0008686">
    <property type="term" value="F:3,4-dihydroxy-2-butanone-4-phosphate synthase activity"/>
    <property type="evidence" value="ECO:0007669"/>
    <property type="project" value="UniProtKB-UniRule"/>
</dbReference>
<dbReference type="GO" id="GO:0005525">
    <property type="term" value="F:GTP binding"/>
    <property type="evidence" value="ECO:0007669"/>
    <property type="project" value="UniProtKB-KW"/>
</dbReference>
<dbReference type="GO" id="GO:0003935">
    <property type="term" value="F:GTP cyclohydrolase II activity"/>
    <property type="evidence" value="ECO:0007669"/>
    <property type="project" value="UniProtKB-UniRule"/>
</dbReference>
<dbReference type="GO" id="GO:0000287">
    <property type="term" value="F:magnesium ion binding"/>
    <property type="evidence" value="ECO:0007669"/>
    <property type="project" value="UniProtKB-UniRule"/>
</dbReference>
<dbReference type="GO" id="GO:0030145">
    <property type="term" value="F:manganese ion binding"/>
    <property type="evidence" value="ECO:0007669"/>
    <property type="project" value="UniProtKB-UniRule"/>
</dbReference>
<dbReference type="GO" id="GO:0008270">
    <property type="term" value="F:zinc ion binding"/>
    <property type="evidence" value="ECO:0007669"/>
    <property type="project" value="UniProtKB-UniRule"/>
</dbReference>
<dbReference type="GO" id="GO:0009231">
    <property type="term" value="P:riboflavin biosynthetic process"/>
    <property type="evidence" value="ECO:0007669"/>
    <property type="project" value="UniProtKB-UniRule"/>
</dbReference>
<dbReference type="CDD" id="cd00641">
    <property type="entry name" value="GTP_cyclohydro2"/>
    <property type="match status" value="1"/>
</dbReference>
<dbReference type="FunFam" id="3.40.50.10990:FF:000002">
    <property type="entry name" value="GTP cyclohydrolase-2"/>
    <property type="match status" value="1"/>
</dbReference>
<dbReference type="FunFam" id="3.90.870.10:FF:000001">
    <property type="entry name" value="Riboflavin biosynthesis protein RibBA"/>
    <property type="match status" value="1"/>
</dbReference>
<dbReference type="Gene3D" id="3.90.870.10">
    <property type="entry name" value="DHBP synthase"/>
    <property type="match status" value="1"/>
</dbReference>
<dbReference type="Gene3D" id="3.40.50.10990">
    <property type="entry name" value="GTP cyclohydrolase II"/>
    <property type="match status" value="1"/>
</dbReference>
<dbReference type="HAMAP" id="MF_00179">
    <property type="entry name" value="RibA"/>
    <property type="match status" value="1"/>
</dbReference>
<dbReference type="HAMAP" id="MF_00180">
    <property type="entry name" value="RibB"/>
    <property type="match status" value="1"/>
</dbReference>
<dbReference type="HAMAP" id="MF_01283">
    <property type="entry name" value="RibBA"/>
    <property type="match status" value="1"/>
</dbReference>
<dbReference type="InterPro" id="IPR017945">
    <property type="entry name" value="DHBP_synth_RibB-like_a/b_dom"/>
</dbReference>
<dbReference type="InterPro" id="IPR000422">
    <property type="entry name" value="DHBP_synthase_RibB"/>
</dbReference>
<dbReference type="InterPro" id="IPR032677">
    <property type="entry name" value="GTP_cyclohydro_II"/>
</dbReference>
<dbReference type="InterPro" id="IPR000926">
    <property type="entry name" value="RibA"/>
</dbReference>
<dbReference type="InterPro" id="IPR036144">
    <property type="entry name" value="RibA-like_sf"/>
</dbReference>
<dbReference type="InterPro" id="IPR016299">
    <property type="entry name" value="Riboflavin_synth_RibBA"/>
</dbReference>
<dbReference type="NCBIfam" id="NF001591">
    <property type="entry name" value="PRK00393.1"/>
    <property type="match status" value="1"/>
</dbReference>
<dbReference type="NCBIfam" id="TIGR00505">
    <property type="entry name" value="ribA"/>
    <property type="match status" value="1"/>
</dbReference>
<dbReference type="NCBIfam" id="TIGR00506">
    <property type="entry name" value="ribB"/>
    <property type="match status" value="1"/>
</dbReference>
<dbReference type="PANTHER" id="PTHR21327:SF18">
    <property type="entry name" value="3,4-DIHYDROXY-2-BUTANONE 4-PHOSPHATE SYNTHASE"/>
    <property type="match status" value="1"/>
</dbReference>
<dbReference type="PANTHER" id="PTHR21327">
    <property type="entry name" value="GTP CYCLOHYDROLASE II-RELATED"/>
    <property type="match status" value="1"/>
</dbReference>
<dbReference type="Pfam" id="PF00926">
    <property type="entry name" value="DHBP_synthase"/>
    <property type="match status" value="1"/>
</dbReference>
<dbReference type="Pfam" id="PF00925">
    <property type="entry name" value="GTP_cyclohydro2"/>
    <property type="match status" value="1"/>
</dbReference>
<dbReference type="PIRSF" id="PIRSF001259">
    <property type="entry name" value="RibA"/>
    <property type="match status" value="1"/>
</dbReference>
<dbReference type="SUPFAM" id="SSF142695">
    <property type="entry name" value="RibA-like"/>
    <property type="match status" value="1"/>
</dbReference>
<dbReference type="SUPFAM" id="SSF55821">
    <property type="entry name" value="YrdC/RibB"/>
    <property type="match status" value="1"/>
</dbReference>
<reference key="1">
    <citation type="journal article" date="2005" name="J. Bacteriol.">
        <title>Insights on evolution of virulence and resistance from the complete genome analysis of an early methicillin-resistant Staphylococcus aureus strain and a biofilm-producing methicillin-resistant Staphylococcus epidermidis strain.</title>
        <authorList>
            <person name="Gill S.R."/>
            <person name="Fouts D.E."/>
            <person name="Archer G.L."/>
            <person name="Mongodin E.F."/>
            <person name="DeBoy R.T."/>
            <person name="Ravel J."/>
            <person name="Paulsen I.T."/>
            <person name="Kolonay J.F."/>
            <person name="Brinkac L.M."/>
            <person name="Beanan M.J."/>
            <person name="Dodson R.J."/>
            <person name="Daugherty S.C."/>
            <person name="Madupu R."/>
            <person name="Angiuoli S.V."/>
            <person name="Durkin A.S."/>
            <person name="Haft D.H."/>
            <person name="Vamathevan J.J."/>
            <person name="Khouri H."/>
            <person name="Utterback T.R."/>
            <person name="Lee C."/>
            <person name="Dimitrov G."/>
            <person name="Jiang L."/>
            <person name="Qin H."/>
            <person name="Weidman J."/>
            <person name="Tran K."/>
            <person name="Kang K.H."/>
            <person name="Hance I.R."/>
            <person name="Nelson K.E."/>
            <person name="Fraser C.M."/>
        </authorList>
    </citation>
    <scope>NUCLEOTIDE SEQUENCE [LARGE SCALE GENOMIC DNA]</scope>
    <source>
        <strain>COL</strain>
    </source>
</reference>
<comment type="function">
    <text evidence="1">Catalyzes the conversion of D-ribulose 5-phosphate to formate and 3,4-dihydroxy-2-butanone 4-phosphate.</text>
</comment>
<comment type="function">
    <text evidence="1">Catalyzes the conversion of GTP to 2,5-diamino-6-ribosylamino-4(3H)-pyrimidinone 5'-phosphate (DARP), formate and pyrophosphate.</text>
</comment>
<comment type="catalytic activity">
    <reaction evidence="1">
        <text>D-ribulose 5-phosphate = (2S)-2-hydroxy-3-oxobutyl phosphate + formate + H(+)</text>
        <dbReference type="Rhea" id="RHEA:18457"/>
        <dbReference type="ChEBI" id="CHEBI:15378"/>
        <dbReference type="ChEBI" id="CHEBI:15740"/>
        <dbReference type="ChEBI" id="CHEBI:58121"/>
        <dbReference type="ChEBI" id="CHEBI:58830"/>
        <dbReference type="EC" id="4.1.99.12"/>
    </reaction>
</comment>
<comment type="catalytic activity">
    <reaction evidence="1">
        <text>GTP + 4 H2O = 2,5-diamino-6-hydroxy-4-(5-phosphoribosylamino)-pyrimidine + formate + 2 phosphate + 3 H(+)</text>
        <dbReference type="Rhea" id="RHEA:23704"/>
        <dbReference type="ChEBI" id="CHEBI:15377"/>
        <dbReference type="ChEBI" id="CHEBI:15378"/>
        <dbReference type="ChEBI" id="CHEBI:15740"/>
        <dbReference type="ChEBI" id="CHEBI:37565"/>
        <dbReference type="ChEBI" id="CHEBI:43474"/>
        <dbReference type="ChEBI" id="CHEBI:58614"/>
        <dbReference type="EC" id="3.5.4.25"/>
    </reaction>
</comment>
<comment type="cofactor">
    <cofactor evidence="1">
        <name>Mg(2+)</name>
        <dbReference type="ChEBI" id="CHEBI:18420"/>
    </cofactor>
    <cofactor evidence="1">
        <name>Mn(2+)</name>
        <dbReference type="ChEBI" id="CHEBI:29035"/>
    </cofactor>
    <text evidence="1">Binds 2 divalent metal cations per subunit. Magnesium or manganese.</text>
</comment>
<comment type="cofactor">
    <cofactor evidence="1">
        <name>Zn(2+)</name>
        <dbReference type="ChEBI" id="CHEBI:29105"/>
    </cofactor>
    <text evidence="1">Binds 1 zinc ion per subunit.</text>
</comment>
<comment type="pathway">
    <text evidence="1">Cofactor biosynthesis; riboflavin biosynthesis; 2-hydroxy-3-oxobutyl phosphate from D-ribulose 5-phosphate: step 1/1.</text>
</comment>
<comment type="pathway">
    <text evidence="1">Cofactor biosynthesis; riboflavin biosynthesis; 5-amino-6-(D-ribitylamino)uracil from GTP: step 1/4.</text>
</comment>
<comment type="similarity">
    <text evidence="1">In the N-terminal section; belongs to the DHBP synthase family.</text>
</comment>
<comment type="similarity">
    <text evidence="1">In the C-terminal section; belongs to the GTP cyclohydrolase II family.</text>
</comment>
<name>RIBBA_STAAC</name>
<keyword id="KW-0342">GTP-binding</keyword>
<keyword id="KW-0378">Hydrolase</keyword>
<keyword id="KW-0456">Lyase</keyword>
<keyword id="KW-0460">Magnesium</keyword>
<keyword id="KW-0464">Manganese</keyword>
<keyword id="KW-0479">Metal-binding</keyword>
<keyword id="KW-0511">Multifunctional enzyme</keyword>
<keyword id="KW-0547">Nucleotide-binding</keyword>
<keyword id="KW-0686">Riboflavin biosynthesis</keyword>
<keyword id="KW-0862">Zinc</keyword>